<gene>
    <name evidence="6" type="primary">NUG2</name>
    <name evidence="5" type="synonym">DGP5</name>
    <name evidence="9" type="ordered locus">At1g52980</name>
    <name evidence="10" type="ORF">F14G24.25</name>
</gene>
<organism evidence="11">
    <name type="scientific">Arabidopsis thaliana</name>
    <name type="common">Mouse-ear cress</name>
    <dbReference type="NCBI Taxonomy" id="3702"/>
    <lineage>
        <taxon>Eukaryota</taxon>
        <taxon>Viridiplantae</taxon>
        <taxon>Streptophyta</taxon>
        <taxon>Embryophyta</taxon>
        <taxon>Tracheophyta</taxon>
        <taxon>Spermatophyta</taxon>
        <taxon>Magnoliopsida</taxon>
        <taxon>eudicotyledons</taxon>
        <taxon>Gunneridae</taxon>
        <taxon>Pentapetalae</taxon>
        <taxon>rosids</taxon>
        <taxon>malvids</taxon>
        <taxon>Brassicales</taxon>
        <taxon>Brassicaceae</taxon>
        <taxon>Camelineae</taxon>
        <taxon>Arabidopsis</taxon>
    </lineage>
</organism>
<proteinExistence type="evidence at protein level"/>
<dbReference type="EMBL" id="AC019018">
    <property type="protein sequence ID" value="AAG52287.1"/>
    <property type="molecule type" value="Genomic_DNA"/>
</dbReference>
<dbReference type="EMBL" id="CP002684">
    <property type="protein sequence ID" value="AEE32873.1"/>
    <property type="molecule type" value="Genomic_DNA"/>
</dbReference>
<dbReference type="EMBL" id="AK319049">
    <property type="protein sequence ID" value="BAH57164.1"/>
    <property type="molecule type" value="mRNA"/>
</dbReference>
<dbReference type="RefSeq" id="NP_175706.1">
    <molecule id="Q9C923-1"/>
    <property type="nucleotide sequence ID" value="NM_104176.4"/>
</dbReference>
<dbReference type="SMR" id="Q9C923"/>
<dbReference type="FunCoup" id="Q9C923">
    <property type="interactions" value="3451"/>
</dbReference>
<dbReference type="STRING" id="3702.Q9C923"/>
<dbReference type="iPTMnet" id="Q9C923"/>
<dbReference type="PaxDb" id="3702-AT1G52980.1"/>
<dbReference type="ProteomicsDB" id="248622">
    <molecule id="Q9C923-1"/>
</dbReference>
<dbReference type="EnsemblPlants" id="AT1G52980.1">
    <molecule id="Q9C923-1"/>
    <property type="protein sequence ID" value="AT1G52980.1"/>
    <property type="gene ID" value="AT1G52980"/>
</dbReference>
<dbReference type="GeneID" id="841731"/>
<dbReference type="Gramene" id="AT1G52980.1">
    <molecule id="Q9C923-1"/>
    <property type="protein sequence ID" value="AT1G52980.1"/>
    <property type="gene ID" value="AT1G52980"/>
</dbReference>
<dbReference type="KEGG" id="ath:AT1G52980"/>
<dbReference type="Araport" id="AT1G52980"/>
<dbReference type="TAIR" id="AT1G52980">
    <property type="gene designation" value="ATNUG2"/>
</dbReference>
<dbReference type="eggNOG" id="KOG2423">
    <property type="taxonomic scope" value="Eukaryota"/>
</dbReference>
<dbReference type="HOGENOM" id="CLU_011106_4_2_1"/>
<dbReference type="InParanoid" id="Q9C923"/>
<dbReference type="OMA" id="RTQGFNH"/>
<dbReference type="PhylomeDB" id="Q9C923"/>
<dbReference type="CD-CODE" id="4299E36E">
    <property type="entry name" value="Nucleolus"/>
</dbReference>
<dbReference type="PRO" id="PR:Q9C923"/>
<dbReference type="Proteomes" id="UP000006548">
    <property type="component" value="Chromosome 1"/>
</dbReference>
<dbReference type="ExpressionAtlas" id="Q9C923">
    <property type="expression patterns" value="baseline and differential"/>
</dbReference>
<dbReference type="GO" id="GO:0005730">
    <property type="term" value="C:nucleolus"/>
    <property type="evidence" value="ECO:0007669"/>
    <property type="project" value="UniProtKB-SubCell"/>
</dbReference>
<dbReference type="GO" id="GO:0005525">
    <property type="term" value="F:GTP binding"/>
    <property type="evidence" value="ECO:0007669"/>
    <property type="project" value="UniProtKB-KW"/>
</dbReference>
<dbReference type="GO" id="GO:0003924">
    <property type="term" value="F:GTPase activity"/>
    <property type="evidence" value="ECO:0000314"/>
    <property type="project" value="TAIR"/>
</dbReference>
<dbReference type="GO" id="GO:0003729">
    <property type="term" value="F:mRNA binding"/>
    <property type="evidence" value="ECO:0000314"/>
    <property type="project" value="TAIR"/>
</dbReference>
<dbReference type="GO" id="GO:0042254">
    <property type="term" value="P:ribosome biogenesis"/>
    <property type="evidence" value="ECO:0000314"/>
    <property type="project" value="TAIR"/>
</dbReference>
<dbReference type="CDD" id="cd01858">
    <property type="entry name" value="NGP_1"/>
    <property type="match status" value="1"/>
</dbReference>
<dbReference type="FunFam" id="3.40.50.300:FF:000559">
    <property type="entry name" value="Nuclear/nucleolar GTPase 2"/>
    <property type="match status" value="1"/>
</dbReference>
<dbReference type="FunFam" id="1.10.1580.10:FF:000001">
    <property type="entry name" value="Nucleolar GTP-binding protein 2"/>
    <property type="match status" value="1"/>
</dbReference>
<dbReference type="Gene3D" id="1.10.1580.10">
    <property type="match status" value="1"/>
</dbReference>
<dbReference type="Gene3D" id="3.40.50.300">
    <property type="entry name" value="P-loop containing nucleotide triphosphate hydrolases"/>
    <property type="match status" value="1"/>
</dbReference>
<dbReference type="InterPro" id="IPR030378">
    <property type="entry name" value="G_CP_dom"/>
</dbReference>
<dbReference type="InterPro" id="IPR024929">
    <property type="entry name" value="GNL2_CP_dom"/>
</dbReference>
<dbReference type="InterPro" id="IPR006073">
    <property type="entry name" value="GTP-bd"/>
</dbReference>
<dbReference type="InterPro" id="IPR023179">
    <property type="entry name" value="GTP-bd_ortho_bundle_sf"/>
</dbReference>
<dbReference type="InterPro" id="IPR012971">
    <property type="entry name" value="NOG2_N_dom"/>
</dbReference>
<dbReference type="InterPro" id="IPR027417">
    <property type="entry name" value="P-loop_NTPase"/>
</dbReference>
<dbReference type="InterPro" id="IPR050755">
    <property type="entry name" value="TRAFAC_YlqF/YawG_RiboMat"/>
</dbReference>
<dbReference type="PANTHER" id="PTHR11089">
    <property type="entry name" value="GTP-BINDING PROTEIN-RELATED"/>
    <property type="match status" value="1"/>
</dbReference>
<dbReference type="PANTHER" id="PTHR11089:SF9">
    <property type="entry name" value="NUCLEOLAR GTP-BINDING PROTEIN 2"/>
    <property type="match status" value="1"/>
</dbReference>
<dbReference type="Pfam" id="PF01926">
    <property type="entry name" value="MMR_HSR1"/>
    <property type="match status" value="1"/>
</dbReference>
<dbReference type="Pfam" id="PF08153">
    <property type="entry name" value="NGP1NT"/>
    <property type="match status" value="1"/>
</dbReference>
<dbReference type="PRINTS" id="PR00326">
    <property type="entry name" value="GTP1OBG"/>
</dbReference>
<dbReference type="SUPFAM" id="SSF52540">
    <property type="entry name" value="P-loop containing nucleoside triphosphate hydrolases"/>
    <property type="match status" value="1"/>
</dbReference>
<dbReference type="PROSITE" id="PS51721">
    <property type="entry name" value="G_CP"/>
    <property type="match status" value="1"/>
</dbReference>
<name>NUG2_ARATH</name>
<sequence length="576" mass="65038">MVKKEKKANVSGKPKHSLDANRADGKKKTTETRSKSTVNRLKMYKTRPKRNAGGKILSNEYQSKELPNSRIAPDRRWFGNTRVVNQKELEYFREELQTKMSSNYNVILKERKLPMSLLTDNKKQSRVHLLDMEPFQDAFGRKTKRKRPKLVASDYEALVKKAAESQDAFEEKNGAGPSGEGGEEEDGFRDLVRHTMFEKGQSKRIWGELYKVIDSSDVIVQVIDARDPQGTRCHHLEKTLKEHHKHKHMILLLNKCDLVPAWATKGWLRVLSKEYPTLAFHASVNKSFGKGSLLSVLRQFARLKSDKQAISVGFVGYPNVGKSSVINTLRTKNVCKVAPIPGETKVWQYITLTKRIFLIDCPGVVYQSRDTETDIVLKGVVRVTNLEDASEHIGEVLRRVKKEHLQRAYKIKDWEDDHDFLLQLCKSSGKLLKGGEPDLMTGAKMILHDWQRGRIPFFVPPPKLDNVASESEVIVPGIDKEAIADNSQAAAALKAIAGIMSTQQQKDVPVQRDFYDEKDLKDDKKAKESTETDAENGTDAEEDEDAVSEDGVESDSDADEDAVSENDEEDESDSAE</sequence>
<feature type="chain" id="PRO_0000432556" description="Nuclear/nucleolar GTPase 2">
    <location>
        <begin position="1"/>
        <end position="576"/>
    </location>
</feature>
<feature type="domain" description="CP-type G" evidence="2">
    <location>
        <begin position="206"/>
        <end position="367"/>
    </location>
</feature>
<feature type="region of interest" description="Disordered" evidence="3">
    <location>
        <begin position="1"/>
        <end position="61"/>
    </location>
</feature>
<feature type="region of interest" description="Disordered" evidence="3">
    <location>
        <begin position="166"/>
        <end position="186"/>
    </location>
</feature>
<feature type="region of interest" description="G4" evidence="2">
    <location>
        <begin position="254"/>
        <end position="257"/>
    </location>
</feature>
<feature type="region of interest" description="G5" evidence="2">
    <location>
        <begin position="283"/>
        <end position="285"/>
    </location>
</feature>
<feature type="region of interest" description="G1" evidence="2">
    <location>
        <begin position="316"/>
        <end position="323"/>
    </location>
</feature>
<feature type="region of interest" description="G2" evidence="2">
    <location>
        <begin position="342"/>
        <end position="346"/>
    </location>
</feature>
<feature type="region of interest" description="G3" evidence="2">
    <location>
        <begin position="360"/>
        <end position="363"/>
    </location>
</feature>
<feature type="region of interest" description="Disordered" evidence="3">
    <location>
        <begin position="502"/>
        <end position="576"/>
    </location>
</feature>
<feature type="short sequence motif" description="DARXP motif">
    <location>
        <begin position="224"/>
        <end position="228"/>
    </location>
</feature>
<feature type="compositionally biased region" description="Basic and acidic residues" evidence="3">
    <location>
        <begin position="16"/>
        <end position="34"/>
    </location>
</feature>
<feature type="compositionally biased region" description="Basic residues" evidence="3">
    <location>
        <begin position="42"/>
        <end position="52"/>
    </location>
</feature>
<feature type="compositionally biased region" description="Basic and acidic residues" evidence="3">
    <location>
        <begin position="509"/>
        <end position="530"/>
    </location>
</feature>
<feature type="compositionally biased region" description="Acidic residues" evidence="3">
    <location>
        <begin position="531"/>
        <end position="576"/>
    </location>
</feature>
<feature type="binding site" evidence="1">
    <location>
        <begin position="254"/>
        <end position="257"/>
    </location>
    <ligand>
        <name>GTP</name>
        <dbReference type="ChEBI" id="CHEBI:37565"/>
    </ligand>
</feature>
<feature type="binding site" evidence="1">
    <location>
        <begin position="319"/>
        <end position="324"/>
    </location>
    <ligand>
        <name>GTP</name>
        <dbReference type="ChEBI" id="CHEBI:37565"/>
    </ligand>
</feature>
<feature type="binding site" evidence="1">
    <location>
        <position position="363"/>
    </location>
    <ligand>
        <name>GTP</name>
        <dbReference type="ChEBI" id="CHEBI:37565"/>
    </ligand>
</feature>
<feature type="splice variant" id="VSP_057528" description="In isoform 2.">
    <original>MVKKEKKANVSGKPKHSLDANRADGKKKTTETRSKSTVNRLKMYKTRPKRNAGGKILSNEYQSKELPNSRIAPDRRWFGNTRVVNQKELEYFREELQTKMSSNYNVILKERKLPMSLLTDNKKQSRVHLLDMEPFQDAFGRKTKRKRPKLVASDYEAL</original>
    <variation>M</variation>
    <location>
        <begin position="1"/>
        <end position="158"/>
    </location>
</feature>
<feature type="sequence conflict" description="In Ref. 3; BAH57164." evidence="7" ref="3">
    <original>E</original>
    <variation>G</variation>
    <location>
        <position position="171"/>
    </location>
</feature>
<feature type="sequence conflict" description="In Ref. 3; BAH57164." evidence="7" ref="3">
    <original>T</original>
    <variation>N</variation>
    <location>
        <position position="231"/>
    </location>
</feature>
<feature type="sequence conflict" description="In Ref. 3; BAH57164." evidence="7" ref="3">
    <original>I</original>
    <variation>N</variation>
    <location>
        <position position="411"/>
    </location>
</feature>
<comment type="function">
    <text evidence="4">GTPase involved in pre-60S ribosomal subunit maturation.</text>
</comment>
<comment type="activity regulation">
    <text evidence="4">The GTPase activity is stimulated in the presence of the 60S ribosomal subunit.</text>
</comment>
<comment type="biophysicochemical properties">
    <kinetics>
        <text evidence="4">kcat is 0.087 min(-1) for GTP.</text>
    </kinetics>
</comment>
<comment type="subunit">
    <text evidence="4">Interacts with the 60S ribosomal proteins RPL10AA, RPL10AB and RPL10AC.</text>
</comment>
<comment type="subcellular location">
    <subcellularLocation>
        <location evidence="4">Nucleus</location>
        <location evidence="4">Nucleolus</location>
    </subcellularLocation>
    <subcellularLocation>
        <location evidence="4">Nucleus</location>
    </subcellularLocation>
</comment>
<comment type="alternative products">
    <event type="alternative splicing"/>
    <isoform>
        <id>Q9C923-1</id>
        <name>1</name>
        <sequence type="displayed"/>
    </isoform>
    <isoform>
        <id>Q9C923-2</id>
        <name>2</name>
        <sequence type="described" ref="VSP_057528"/>
    </isoform>
</comment>
<comment type="tissue specificity">
    <text evidence="4">Ubiquitous, with higher levels in meristematic regions.</text>
</comment>
<comment type="domain">
    <text evidence="7">In contrast to other GTP-binding proteins, this family is characterized by a circular permutation of the GTPase motifs described by a G4-G1-G3 pattern.</text>
</comment>
<comment type="domain">
    <text evidence="8">The DARXP motif is also sometime designated as G6 region.</text>
</comment>
<comment type="similarity">
    <text evidence="2">Belongs to the TRAFAC class YlqF/YawG GTPase family. RsgA subfamily.</text>
</comment>
<evidence type="ECO:0000250" key="1">
    <source>
        <dbReference type="UniProtKB" id="O31743"/>
    </source>
</evidence>
<evidence type="ECO:0000255" key="2">
    <source>
        <dbReference type="PROSITE-ProRule" id="PRU01058"/>
    </source>
</evidence>
<evidence type="ECO:0000256" key="3">
    <source>
        <dbReference type="SAM" id="MobiDB-lite"/>
    </source>
</evidence>
<evidence type="ECO:0000269" key="4">
    <source>
    </source>
</evidence>
<evidence type="ECO:0000303" key="5">
    <source>
    </source>
</evidence>
<evidence type="ECO:0000303" key="6">
    <source>
    </source>
</evidence>
<evidence type="ECO:0000305" key="7"/>
<evidence type="ECO:0000305" key="8">
    <source>
    </source>
</evidence>
<evidence type="ECO:0000312" key="9">
    <source>
        <dbReference type="Araport" id="AT1G52980"/>
    </source>
</evidence>
<evidence type="ECO:0000312" key="10">
    <source>
        <dbReference type="EMBL" id="AAG52287.1"/>
    </source>
</evidence>
<evidence type="ECO:0000312" key="11">
    <source>
        <dbReference type="Proteomes" id="UP000006548"/>
    </source>
</evidence>
<protein>
    <recommendedName>
        <fullName evidence="6">Nuclear/nucleolar GTPase 2</fullName>
        <shortName evidence="6">AtNug2</shortName>
    </recommendedName>
    <alternativeName>
        <fullName evidence="5">DAR GTPase 5</fullName>
    </alternativeName>
</protein>
<accession>Q9C923</accession>
<accession>C0Z385</accession>
<reference key="1">
    <citation type="journal article" date="2000" name="Nature">
        <title>Sequence and analysis of chromosome 1 of the plant Arabidopsis thaliana.</title>
        <authorList>
            <person name="Theologis A."/>
            <person name="Ecker J.R."/>
            <person name="Palm C.J."/>
            <person name="Federspiel N.A."/>
            <person name="Kaul S."/>
            <person name="White O."/>
            <person name="Alonso J."/>
            <person name="Altafi H."/>
            <person name="Araujo R."/>
            <person name="Bowman C.L."/>
            <person name="Brooks S.Y."/>
            <person name="Buehler E."/>
            <person name="Chan A."/>
            <person name="Chao Q."/>
            <person name="Chen H."/>
            <person name="Cheuk R.F."/>
            <person name="Chin C.W."/>
            <person name="Chung M.K."/>
            <person name="Conn L."/>
            <person name="Conway A.B."/>
            <person name="Conway A.R."/>
            <person name="Creasy T.H."/>
            <person name="Dewar K."/>
            <person name="Dunn P."/>
            <person name="Etgu P."/>
            <person name="Feldblyum T.V."/>
            <person name="Feng J.-D."/>
            <person name="Fong B."/>
            <person name="Fujii C.Y."/>
            <person name="Gill J.E."/>
            <person name="Goldsmith A.D."/>
            <person name="Haas B."/>
            <person name="Hansen N.F."/>
            <person name="Hughes B."/>
            <person name="Huizar L."/>
            <person name="Hunter J.L."/>
            <person name="Jenkins J."/>
            <person name="Johnson-Hopson C."/>
            <person name="Khan S."/>
            <person name="Khaykin E."/>
            <person name="Kim C.J."/>
            <person name="Koo H.L."/>
            <person name="Kremenetskaia I."/>
            <person name="Kurtz D.B."/>
            <person name="Kwan A."/>
            <person name="Lam B."/>
            <person name="Langin-Hooper S."/>
            <person name="Lee A."/>
            <person name="Lee J.M."/>
            <person name="Lenz C.A."/>
            <person name="Li J.H."/>
            <person name="Li Y.-P."/>
            <person name="Lin X."/>
            <person name="Liu S.X."/>
            <person name="Liu Z.A."/>
            <person name="Luros J.S."/>
            <person name="Maiti R."/>
            <person name="Marziali A."/>
            <person name="Militscher J."/>
            <person name="Miranda M."/>
            <person name="Nguyen M."/>
            <person name="Nierman W.C."/>
            <person name="Osborne B.I."/>
            <person name="Pai G."/>
            <person name="Peterson J."/>
            <person name="Pham P.K."/>
            <person name="Rizzo M."/>
            <person name="Rooney T."/>
            <person name="Rowley D."/>
            <person name="Sakano H."/>
            <person name="Salzberg S.L."/>
            <person name="Schwartz J.R."/>
            <person name="Shinn P."/>
            <person name="Southwick A.M."/>
            <person name="Sun H."/>
            <person name="Tallon L.J."/>
            <person name="Tambunga G."/>
            <person name="Toriumi M.J."/>
            <person name="Town C.D."/>
            <person name="Utterback T."/>
            <person name="Van Aken S."/>
            <person name="Vaysberg M."/>
            <person name="Vysotskaia V.S."/>
            <person name="Walker M."/>
            <person name="Wu D."/>
            <person name="Yu G."/>
            <person name="Fraser C.M."/>
            <person name="Venter J.C."/>
            <person name="Davis R.W."/>
        </authorList>
    </citation>
    <scope>NUCLEOTIDE SEQUENCE [LARGE SCALE GENOMIC DNA]</scope>
    <source>
        <strain>cv. Columbia</strain>
    </source>
</reference>
<reference key="2">
    <citation type="journal article" date="2017" name="Plant J.">
        <title>Araport11: a complete reannotation of the Arabidopsis thaliana reference genome.</title>
        <authorList>
            <person name="Cheng C.Y."/>
            <person name="Krishnakumar V."/>
            <person name="Chan A.P."/>
            <person name="Thibaud-Nissen F."/>
            <person name="Schobel S."/>
            <person name="Town C.D."/>
        </authorList>
    </citation>
    <scope>GENOME REANNOTATION</scope>
    <source>
        <strain>cv. Columbia</strain>
    </source>
</reference>
<reference key="3">
    <citation type="journal article" date="2009" name="DNA Res.">
        <title>Analysis of multiple occurrences of alternative splicing events in Arabidopsis thaliana using novel sequenced full-length cDNAs.</title>
        <authorList>
            <person name="Iida K."/>
            <person name="Fukami-Kobayashi K."/>
            <person name="Toyoda A."/>
            <person name="Sakaki Y."/>
            <person name="Kobayashi M."/>
            <person name="Seki M."/>
            <person name="Shinozaki K."/>
        </authorList>
    </citation>
    <scope>NUCLEOTIDE SEQUENCE [LARGE SCALE MRNA] (ISOFORM 2)</scope>
    <source>
        <strain>cv. Columbia</strain>
    </source>
</reference>
<reference key="4">
    <citation type="journal article" date="1998" name="Gene">
        <title>Analysis of the genomic organisation of a small chromosome of Leishmania braziliensis M2903 reveals two genes encoding GTP-binding proteins, one of which belongs to a new G-protein family and is an antigen.</title>
        <authorList>
            <person name="Fu G."/>
            <person name="Melville S."/>
            <person name="Brewster S."/>
            <person name="Warner J."/>
            <person name="Barker D.C."/>
        </authorList>
    </citation>
    <scope>DOMAIN</scope>
    <scope>GENE FAMILY</scope>
</reference>
<reference key="5">
    <citation type="journal article" date="2006" name="Genetics">
        <title>Arabidopsis SHORT INTEGUMENTS 2 is a mitochondrial DAR GTPase.</title>
        <authorList>
            <person name="Hill T.A."/>
            <person name="Broadhvest J."/>
            <person name="Kuzoff R.K."/>
            <person name="Gasser C.S."/>
        </authorList>
    </citation>
    <scope>GENE FAMILY</scope>
    <scope>NOMENCLATURE</scope>
</reference>
<reference key="6">
    <citation type="journal article" date="2007" name="Mol. Cell. Proteomics">
        <title>Multidimensional protein identification technology (MudPIT) analysis of ubiquitinated proteins in plants.</title>
        <authorList>
            <person name="Maor R."/>
            <person name="Jones A."/>
            <person name="Nuehse T.S."/>
            <person name="Studholme D.J."/>
            <person name="Peck S.C."/>
            <person name="Shirasu K."/>
        </authorList>
    </citation>
    <scope>IDENTIFICATION BY MASS SPECTROMETRY [LARGE SCALE ANALYSIS]</scope>
    <source>
        <strain>cv. Landsberg erecta</strain>
    </source>
</reference>
<reference key="7">
    <citation type="journal article" date="2011" name="J. Biol. Chem.">
        <title>Nuclear/nucleolar GTPase 2 proteins as a subfamily of YlqF/YawG GTPases function in pre-60S ribosomal subunit maturation of mono- and dicotyledonous plants.</title>
        <authorList>
            <person name="Im C.H."/>
            <person name="Hwang S.M."/>
            <person name="Son Y.S."/>
            <person name="Heo J.B."/>
            <person name="Bang W.Y."/>
            <person name="Suwastika I.N."/>
            <person name="Shiina T."/>
            <person name="Bahk J.D."/>
        </authorList>
    </citation>
    <scope>FUNCTION</scope>
    <scope>TISSUE SPECIFICITY</scope>
    <scope>BIOPHYSICOCHEMICAL PROPERTIES</scope>
    <scope>ACTIVITY REGULATION</scope>
    <scope>SUBCELLULAR LOCATION</scope>
    <scope>INTERACTION WITH RPL10AA; RPL10AB AND RPL10AC</scope>
</reference>
<keyword id="KW-0025">Alternative splicing</keyword>
<keyword id="KW-0342">GTP-binding</keyword>
<keyword id="KW-0378">Hydrolase</keyword>
<keyword id="KW-0547">Nucleotide-binding</keyword>
<keyword id="KW-0539">Nucleus</keyword>
<keyword id="KW-1185">Reference proteome</keyword>